<evidence type="ECO:0000250" key="1">
    <source>
        <dbReference type="UniProtKB" id="P50389"/>
    </source>
</evidence>
<evidence type="ECO:0000255" key="2">
    <source>
        <dbReference type="HAMAP-Rule" id="MF_01627"/>
    </source>
</evidence>
<reference key="1">
    <citation type="journal article" date="2005" name="Nucleic Acids Res.">
        <title>The genome sequence of Salmonella enterica serovar Choleraesuis, a highly invasive and resistant zoonotic pathogen.</title>
        <authorList>
            <person name="Chiu C.-H."/>
            <person name="Tang P."/>
            <person name="Chu C."/>
            <person name="Hu S."/>
            <person name="Bao Q."/>
            <person name="Yu J."/>
            <person name="Chou Y.-Y."/>
            <person name="Wang H.-S."/>
            <person name="Lee Y.-S."/>
        </authorList>
    </citation>
    <scope>NUCLEOTIDE SEQUENCE [LARGE SCALE GENOMIC DNA]</scope>
    <source>
        <strain>SC-B67</strain>
    </source>
</reference>
<sequence length="239" mass="25979">MATPHINAEMGDFADVVLMPGDPLRAKHIAETFLEDVREVNNVRGMLGFTGTYKGRKISVMGHGMGIPSCSIYTKELITDFGVKKIIRVGSCGAVRMDVKLRDVVIGMGACTDSKVNRIRFKDHDFAAIADFDMVRNAVDAAKALGVDARVGNLFSADLFYSPDGEMFDVMEKYGVLGVEMEAAGIYGVAAEFGAKALTICTVSDHIRTHEQTTAAERQTTFNDMIKIALESVLLGDQE</sequence>
<comment type="function">
    <text evidence="2">Catalyzes the reversible phosphorolytic breakdown of the N-glycosidic bond in the beta-(deoxy)ribonucleoside molecules, with the formation of the corresponding free purine bases and pentose-1-phosphate.</text>
</comment>
<comment type="catalytic activity">
    <reaction evidence="2">
        <text>a purine D-ribonucleoside + phosphate = a purine nucleobase + alpha-D-ribose 1-phosphate</text>
        <dbReference type="Rhea" id="RHEA:19805"/>
        <dbReference type="ChEBI" id="CHEBI:26386"/>
        <dbReference type="ChEBI" id="CHEBI:43474"/>
        <dbReference type="ChEBI" id="CHEBI:57720"/>
        <dbReference type="ChEBI" id="CHEBI:142355"/>
        <dbReference type="EC" id="2.4.2.1"/>
    </reaction>
</comment>
<comment type="catalytic activity">
    <reaction evidence="2">
        <text>a purine 2'-deoxy-D-ribonucleoside + phosphate = a purine nucleobase + 2-deoxy-alpha-D-ribose 1-phosphate</text>
        <dbReference type="Rhea" id="RHEA:36431"/>
        <dbReference type="ChEBI" id="CHEBI:26386"/>
        <dbReference type="ChEBI" id="CHEBI:43474"/>
        <dbReference type="ChEBI" id="CHEBI:57259"/>
        <dbReference type="ChEBI" id="CHEBI:142361"/>
        <dbReference type="EC" id="2.4.2.1"/>
    </reaction>
</comment>
<comment type="subunit">
    <text evidence="2">Homohexamer; trimer of homodimers.</text>
</comment>
<comment type="similarity">
    <text evidence="2">Belongs to the PNP/UDP phosphorylase family.</text>
</comment>
<name>DEOD_SALCH</name>
<organism>
    <name type="scientific">Salmonella choleraesuis (strain SC-B67)</name>
    <dbReference type="NCBI Taxonomy" id="321314"/>
    <lineage>
        <taxon>Bacteria</taxon>
        <taxon>Pseudomonadati</taxon>
        <taxon>Pseudomonadota</taxon>
        <taxon>Gammaproteobacteria</taxon>
        <taxon>Enterobacterales</taxon>
        <taxon>Enterobacteriaceae</taxon>
        <taxon>Salmonella</taxon>
    </lineage>
</organism>
<keyword id="KW-0328">Glycosyltransferase</keyword>
<keyword id="KW-0808">Transferase</keyword>
<proteinExistence type="inferred from homology"/>
<feature type="chain" id="PRO_0000063155" description="Purine nucleoside phosphorylase DeoD-type">
    <location>
        <begin position="1"/>
        <end position="239"/>
    </location>
</feature>
<feature type="active site" description="Proton donor" evidence="2">
    <location>
        <position position="205"/>
    </location>
</feature>
<feature type="binding site" evidence="1">
    <location>
        <position position="5"/>
    </location>
    <ligand>
        <name>a purine D-ribonucleoside</name>
        <dbReference type="ChEBI" id="CHEBI:142355"/>
        <note>ligand shared between dimeric partners</note>
    </ligand>
</feature>
<feature type="binding site" description="in other chain" evidence="1">
    <location>
        <position position="21"/>
    </location>
    <ligand>
        <name>phosphate</name>
        <dbReference type="ChEBI" id="CHEBI:43474"/>
        <note>ligand shared between dimeric partners</note>
    </ligand>
</feature>
<feature type="binding site" description="in other chain" evidence="1">
    <location>
        <position position="25"/>
    </location>
    <ligand>
        <name>phosphate</name>
        <dbReference type="ChEBI" id="CHEBI:43474"/>
        <note>ligand shared between dimeric partners</note>
    </ligand>
</feature>
<feature type="binding site" evidence="1">
    <location>
        <position position="44"/>
    </location>
    <ligand>
        <name>phosphate</name>
        <dbReference type="ChEBI" id="CHEBI:43474"/>
        <note>ligand shared between dimeric partners</note>
    </ligand>
</feature>
<feature type="binding site" description="in other chain" evidence="1">
    <location>
        <begin position="88"/>
        <end position="91"/>
    </location>
    <ligand>
        <name>phosphate</name>
        <dbReference type="ChEBI" id="CHEBI:43474"/>
        <note>ligand shared between dimeric partners</note>
    </ligand>
</feature>
<feature type="binding site" description="in other chain" evidence="1">
    <location>
        <begin position="180"/>
        <end position="182"/>
    </location>
    <ligand>
        <name>a purine D-ribonucleoside</name>
        <dbReference type="ChEBI" id="CHEBI:142355"/>
        <note>ligand shared between dimeric partners</note>
    </ligand>
</feature>
<feature type="binding site" description="in other chain" evidence="1">
    <location>
        <begin position="204"/>
        <end position="205"/>
    </location>
    <ligand>
        <name>a purine D-ribonucleoside</name>
        <dbReference type="ChEBI" id="CHEBI:142355"/>
        <note>ligand shared between dimeric partners</note>
    </ligand>
</feature>
<feature type="site" description="Important for catalytic activity" evidence="2">
    <location>
        <position position="218"/>
    </location>
</feature>
<dbReference type="EC" id="2.4.2.1" evidence="2"/>
<dbReference type="EMBL" id="AE017220">
    <property type="protein sequence ID" value="AAX68324.1"/>
    <property type="molecule type" value="Genomic_DNA"/>
</dbReference>
<dbReference type="RefSeq" id="WP_000224865.1">
    <property type="nucleotide sequence ID" value="NC_006905.1"/>
</dbReference>
<dbReference type="SMR" id="Q57G38"/>
<dbReference type="KEGG" id="sec:SCH_4418"/>
<dbReference type="HOGENOM" id="CLU_068457_2_0_6"/>
<dbReference type="Proteomes" id="UP000000538">
    <property type="component" value="Chromosome"/>
</dbReference>
<dbReference type="GO" id="GO:0005829">
    <property type="term" value="C:cytosol"/>
    <property type="evidence" value="ECO:0007669"/>
    <property type="project" value="TreeGrafter"/>
</dbReference>
<dbReference type="GO" id="GO:0004731">
    <property type="term" value="F:purine-nucleoside phosphorylase activity"/>
    <property type="evidence" value="ECO:0007669"/>
    <property type="project" value="UniProtKB-UniRule"/>
</dbReference>
<dbReference type="GO" id="GO:0006152">
    <property type="term" value="P:purine nucleoside catabolic process"/>
    <property type="evidence" value="ECO:0007669"/>
    <property type="project" value="TreeGrafter"/>
</dbReference>
<dbReference type="CDD" id="cd09006">
    <property type="entry name" value="PNP_EcPNPI-like"/>
    <property type="match status" value="1"/>
</dbReference>
<dbReference type="FunFam" id="3.40.50.1580:FF:000002">
    <property type="entry name" value="Purine nucleoside phosphorylase DeoD-type"/>
    <property type="match status" value="1"/>
</dbReference>
<dbReference type="Gene3D" id="3.40.50.1580">
    <property type="entry name" value="Nucleoside phosphorylase domain"/>
    <property type="match status" value="1"/>
</dbReference>
<dbReference type="HAMAP" id="MF_01627">
    <property type="entry name" value="Pur_nucleosid_phosp"/>
    <property type="match status" value="1"/>
</dbReference>
<dbReference type="InterPro" id="IPR004402">
    <property type="entry name" value="DeoD-type"/>
</dbReference>
<dbReference type="InterPro" id="IPR018016">
    <property type="entry name" value="Nucleoside_phosphorylase_CS"/>
</dbReference>
<dbReference type="InterPro" id="IPR000845">
    <property type="entry name" value="Nucleoside_phosphorylase_d"/>
</dbReference>
<dbReference type="InterPro" id="IPR035994">
    <property type="entry name" value="Nucleoside_phosphorylase_sf"/>
</dbReference>
<dbReference type="NCBIfam" id="TIGR00107">
    <property type="entry name" value="deoD"/>
    <property type="match status" value="1"/>
</dbReference>
<dbReference type="NCBIfam" id="NF004489">
    <property type="entry name" value="PRK05819.1"/>
    <property type="match status" value="1"/>
</dbReference>
<dbReference type="NCBIfam" id="NF009914">
    <property type="entry name" value="PRK13374.1"/>
    <property type="match status" value="1"/>
</dbReference>
<dbReference type="PANTHER" id="PTHR43691:SF2">
    <property type="entry name" value="PURINE NUCLEOSIDE PHOSPHORYLASE DEOD-TYPE"/>
    <property type="match status" value="1"/>
</dbReference>
<dbReference type="PANTHER" id="PTHR43691">
    <property type="entry name" value="URIDINE PHOSPHORYLASE"/>
    <property type="match status" value="1"/>
</dbReference>
<dbReference type="Pfam" id="PF01048">
    <property type="entry name" value="PNP_UDP_1"/>
    <property type="match status" value="1"/>
</dbReference>
<dbReference type="SUPFAM" id="SSF53167">
    <property type="entry name" value="Purine and uridine phosphorylases"/>
    <property type="match status" value="1"/>
</dbReference>
<dbReference type="PROSITE" id="PS01232">
    <property type="entry name" value="PNP_UDP_1"/>
    <property type="match status" value="1"/>
</dbReference>
<protein>
    <recommendedName>
        <fullName evidence="2">Purine nucleoside phosphorylase DeoD-type</fullName>
        <shortName evidence="2">PNP</shortName>
        <ecNumber evidence="2">2.4.2.1</ecNumber>
    </recommendedName>
</protein>
<accession>Q57G38</accession>
<gene>
    <name evidence="2" type="primary">deoD</name>
    <name type="ordered locus">SCH_4418</name>
</gene>